<name>GSPE_PECCC</name>
<accession>P31703</accession>
<dbReference type="EC" id="7.4.2.8" evidence="1"/>
<dbReference type="EMBL" id="X70049">
    <property type="protein sequence ID" value="CAA49646.1"/>
    <property type="molecule type" value="Genomic_DNA"/>
</dbReference>
<dbReference type="PIR" id="S32859">
    <property type="entry name" value="S32859"/>
</dbReference>
<dbReference type="RefSeq" id="WP_180780739.1">
    <property type="nucleotide sequence ID" value="NZ_BRCV01000003.1"/>
</dbReference>
<dbReference type="SMR" id="P31703"/>
<dbReference type="GO" id="GO:0005886">
    <property type="term" value="C:plasma membrane"/>
    <property type="evidence" value="ECO:0007669"/>
    <property type="project" value="UniProtKB-SubCell"/>
</dbReference>
<dbReference type="GO" id="GO:0015627">
    <property type="term" value="C:type II protein secretion system complex"/>
    <property type="evidence" value="ECO:0007669"/>
    <property type="project" value="InterPro"/>
</dbReference>
<dbReference type="GO" id="GO:0005524">
    <property type="term" value="F:ATP binding"/>
    <property type="evidence" value="ECO:0007669"/>
    <property type="project" value="UniProtKB-KW"/>
</dbReference>
<dbReference type="GO" id="GO:0016887">
    <property type="term" value="F:ATP hydrolysis activity"/>
    <property type="evidence" value="ECO:0007669"/>
    <property type="project" value="InterPro"/>
</dbReference>
<dbReference type="GO" id="GO:0046872">
    <property type="term" value="F:metal ion binding"/>
    <property type="evidence" value="ECO:0007669"/>
    <property type="project" value="UniProtKB-KW"/>
</dbReference>
<dbReference type="GO" id="GO:0008564">
    <property type="term" value="F:protein-exporting ATPase activity"/>
    <property type="evidence" value="ECO:0007669"/>
    <property type="project" value="UniProtKB-EC"/>
</dbReference>
<dbReference type="GO" id="GO:0015628">
    <property type="term" value="P:protein secretion by the type II secretion system"/>
    <property type="evidence" value="ECO:0007669"/>
    <property type="project" value="InterPro"/>
</dbReference>
<dbReference type="CDD" id="cd01129">
    <property type="entry name" value="PulE-GspE-like"/>
    <property type="match status" value="1"/>
</dbReference>
<dbReference type="FunFam" id="3.30.450.90:FF:000001">
    <property type="entry name" value="Type II secretion system ATPase GspE"/>
    <property type="match status" value="1"/>
</dbReference>
<dbReference type="FunFam" id="3.40.50.300:FF:000398">
    <property type="entry name" value="Type IV pilus assembly ATPase PilB"/>
    <property type="match status" value="1"/>
</dbReference>
<dbReference type="Gene3D" id="3.30.450.90">
    <property type="match status" value="1"/>
</dbReference>
<dbReference type="Gene3D" id="3.40.50.300">
    <property type="entry name" value="P-loop containing nucleotide triphosphate hydrolases"/>
    <property type="match status" value="1"/>
</dbReference>
<dbReference type="Gene3D" id="3.30.300.160">
    <property type="entry name" value="Type II secretion system, protein E, N-terminal domain"/>
    <property type="match status" value="1"/>
</dbReference>
<dbReference type="InterPro" id="IPR003593">
    <property type="entry name" value="AAA+_ATPase"/>
</dbReference>
<dbReference type="InterPro" id="IPR054757">
    <property type="entry name" value="GSPE_N1E"/>
</dbReference>
<dbReference type="InterPro" id="IPR027417">
    <property type="entry name" value="P-loop_NTPase"/>
</dbReference>
<dbReference type="InterPro" id="IPR001482">
    <property type="entry name" value="T2SS/T4SS_dom"/>
</dbReference>
<dbReference type="InterPro" id="IPR037257">
    <property type="entry name" value="T2SS_E_N_sf"/>
</dbReference>
<dbReference type="InterPro" id="IPR013369">
    <property type="entry name" value="T2SS_GspE"/>
</dbReference>
<dbReference type="NCBIfam" id="TIGR02533">
    <property type="entry name" value="type_II_gspE"/>
    <property type="match status" value="1"/>
</dbReference>
<dbReference type="PANTHER" id="PTHR30258:SF27">
    <property type="entry name" value="BACTERIOPHAGE ADSORPTION PROTEIN B-RELATED"/>
    <property type="match status" value="1"/>
</dbReference>
<dbReference type="PANTHER" id="PTHR30258">
    <property type="entry name" value="TYPE II SECRETION SYSTEM PROTEIN GSPE-RELATED"/>
    <property type="match status" value="1"/>
</dbReference>
<dbReference type="Pfam" id="PF22341">
    <property type="entry name" value="GSPE_N1E"/>
    <property type="match status" value="1"/>
</dbReference>
<dbReference type="Pfam" id="PF00437">
    <property type="entry name" value="T2SSE"/>
    <property type="match status" value="1"/>
</dbReference>
<dbReference type="SMART" id="SM00382">
    <property type="entry name" value="AAA"/>
    <property type="match status" value="1"/>
</dbReference>
<dbReference type="SUPFAM" id="SSF160246">
    <property type="entry name" value="EspE N-terminal domain-like"/>
    <property type="match status" value="1"/>
</dbReference>
<dbReference type="SUPFAM" id="SSF52540">
    <property type="entry name" value="P-loop containing nucleoside triphosphate hydrolases"/>
    <property type="match status" value="1"/>
</dbReference>
<dbReference type="PROSITE" id="PS00662">
    <property type="entry name" value="T2SP_E"/>
    <property type="match status" value="1"/>
</dbReference>
<gene>
    <name type="primary">outE</name>
</gene>
<evidence type="ECO:0000250" key="1">
    <source>
        <dbReference type="UniProtKB" id="P37093"/>
    </source>
</evidence>
<evidence type="ECO:0000250" key="2">
    <source>
        <dbReference type="UniProtKB" id="Q00512"/>
    </source>
</evidence>
<evidence type="ECO:0000255" key="3"/>
<evidence type="ECO:0000305" key="4"/>
<sequence>MSDVASQIIELRPILPFAYARSQQILLLQRENDASLQTICVAQTPPAALLEARRIAGCSLRIERVTDEEFERQLVISYQRDSEEARRMMEDIGNEMDFYTLVEELPDSDDLLDADDDAPIIRLINAMLTEAIKNKASDIHIETYERYLLIRFRVDGVLREILRPQRKLASLLVSRIKVMAKLDIAEKRVPQDGRMALRVGGRAIDVRVSTLPSNYGERVVLRLLDKNSVKLDLELLGMSERNRQLLDSLIHRPHGIILVTGPTGSGKSTTLYAALSRLNASERNIMTVEDPIEYELEGIGQTQVNTKVDMTFARGLRAILRQDPDVVLVGEIRDGETAQIAVQASLTGHLVLSTLHTNSALGALSRLQDMGVEPFLLSTSLLGVLAQRLVRTLCSDCSQPQPVDPVQAEQMGIAPGTLLHNPVGCPQCSFTGYRGRIGIHELVLINDDVRAAIHRSDGEMAIAQILGGSRTTIRQDGLNKVLAGLTTWEEVIRVTKEE</sequence>
<feature type="chain" id="PRO_0000207287" description="Type II secretion system protein E">
    <location>
        <begin position="1"/>
        <end position="498"/>
    </location>
</feature>
<feature type="binding site" evidence="3">
    <location>
        <begin position="261"/>
        <end position="268"/>
    </location>
    <ligand>
        <name>ATP</name>
        <dbReference type="ChEBI" id="CHEBI:30616"/>
    </ligand>
</feature>
<feature type="binding site" evidence="1">
    <location>
        <position position="394"/>
    </location>
    <ligand>
        <name>Zn(2+)</name>
        <dbReference type="ChEBI" id="CHEBI:29105"/>
    </ligand>
</feature>
<feature type="binding site" evidence="1">
    <location>
        <position position="397"/>
    </location>
    <ligand>
        <name>Zn(2+)</name>
        <dbReference type="ChEBI" id="CHEBI:29105"/>
    </ligand>
</feature>
<feature type="binding site" evidence="1">
    <location>
        <position position="425"/>
    </location>
    <ligand>
        <name>Zn(2+)</name>
        <dbReference type="ChEBI" id="CHEBI:29105"/>
    </ligand>
</feature>
<feature type="binding site" evidence="1">
    <location>
        <position position="428"/>
    </location>
    <ligand>
        <name>Zn(2+)</name>
        <dbReference type="ChEBI" id="CHEBI:29105"/>
    </ligand>
</feature>
<organism>
    <name type="scientific">Pectobacterium carotovorum subsp. carotovorum</name>
    <name type="common">Erwinia carotovora subsp. carotovora</name>
    <dbReference type="NCBI Taxonomy" id="555"/>
    <lineage>
        <taxon>Bacteria</taxon>
        <taxon>Pseudomonadati</taxon>
        <taxon>Pseudomonadota</taxon>
        <taxon>Gammaproteobacteria</taxon>
        <taxon>Enterobacterales</taxon>
        <taxon>Pectobacteriaceae</taxon>
        <taxon>Pectobacterium</taxon>
    </lineage>
</organism>
<reference key="1">
    <citation type="journal article" date="1993" name="Mol. Microbiol.">
        <title>Molecular cloning and characterization of 13 out genes from Erwinia carotovora subspecies carotovora: genes encoding members of a general secretion pathway (GSP) widespread in Gram-negative bacteria.</title>
        <authorList>
            <person name="Reeves P.J."/>
            <person name="Whitcombe D."/>
            <person name="Wharam S."/>
            <person name="Gibson M."/>
            <person name="Allison G."/>
            <person name="Bunce N."/>
            <person name="Barallon R."/>
            <person name="Douglas P."/>
            <person name="Mulholland V."/>
            <person name="Stevens S."/>
            <person name="Walker S."/>
            <person name="Salmond G.P.C."/>
        </authorList>
    </citation>
    <scope>NUCLEOTIDE SEQUENCE [GENOMIC DNA]</scope>
    <source>
        <strain>SCRI 193</strain>
    </source>
</reference>
<comment type="function">
    <text evidence="2">ATPase component of the type II secretion system required for the energy-dependent secretion of extracellular factors such as proteases and toxins from the periplasm. Acts as a molecular motor to provide the energy that is required for assembly of the pseudopilus and the extrusion of substrates generated in the cytoplasm.</text>
</comment>
<comment type="catalytic activity">
    <reaction evidence="1">
        <text>ATP + H2O + cellular proteinSide 1 = ADP + phosphate + cellular proteinSide 2.</text>
        <dbReference type="EC" id="7.4.2.8"/>
    </reaction>
</comment>
<comment type="cofactor">
    <cofactor evidence="1">
        <name>Zn(2+)</name>
        <dbReference type="ChEBI" id="CHEBI:29105"/>
    </cofactor>
</comment>
<comment type="subunit">
    <text evidence="1 2">Forms homooligomers; most probably hexamers (By similarity). Interacts with OutL/GspL (By similarity).</text>
</comment>
<comment type="subcellular location">
    <subcellularLocation>
        <location evidence="2">Cell inner membrane</location>
    </subcellularLocation>
    <text evidence="2">Membrane association is not an intrinsic property but requires the OutL/GspL gene product.</text>
</comment>
<comment type="similarity">
    <text evidence="4">Belongs to the GSP E family.</text>
</comment>
<proteinExistence type="inferred from homology"/>
<protein>
    <recommendedName>
        <fullName>Type II secretion system protein E</fullName>
        <shortName>T2SS protein E</shortName>
        <ecNumber evidence="1">7.4.2.8</ecNumber>
    </recommendedName>
    <alternativeName>
        <fullName>General secretion pathway protein E</fullName>
    </alternativeName>
    <alternativeName>
        <fullName>Pectic enzymes secretion protein OutE</fullName>
    </alternativeName>
    <alternativeName>
        <fullName>Type II traffic warden ATPase</fullName>
    </alternativeName>
</protein>
<keyword id="KW-0067">ATP-binding</keyword>
<keyword id="KW-0997">Cell inner membrane</keyword>
<keyword id="KW-1003">Cell membrane</keyword>
<keyword id="KW-0472">Membrane</keyword>
<keyword id="KW-0479">Metal-binding</keyword>
<keyword id="KW-0547">Nucleotide-binding</keyword>
<keyword id="KW-0653">Protein transport</keyword>
<keyword id="KW-1278">Translocase</keyword>
<keyword id="KW-0813">Transport</keyword>
<keyword id="KW-0862">Zinc</keyword>